<sequence length="111" mass="12271">MCAKPNHLFVTVTFIFGFAVCIVQISAWTSIGKIAIKDGKCDPKNGKLYSIGEKWHNNEDCFEITCIQGNKGTVAQQVTSCPVHAMKTGCKLKFPKGEFPNCCPFYDCSKN</sequence>
<dbReference type="SMR" id="P0DQG9"/>
<dbReference type="GO" id="GO:0005576">
    <property type="term" value="C:extracellular region"/>
    <property type="evidence" value="ECO:0007669"/>
    <property type="project" value="UniProtKB-SubCell"/>
</dbReference>
<dbReference type="GO" id="GO:0090729">
    <property type="term" value="F:toxin activity"/>
    <property type="evidence" value="ECO:0007669"/>
    <property type="project" value="UniProtKB-KW"/>
</dbReference>
<dbReference type="InterPro" id="IPR029277">
    <property type="entry name" value="SVWC_dom"/>
</dbReference>
<dbReference type="Pfam" id="PF15430">
    <property type="entry name" value="SVWC"/>
    <property type="match status" value="1"/>
</dbReference>
<evidence type="ECO:0000255" key="1"/>
<evidence type="ECO:0000303" key="2">
    <source>
    </source>
</evidence>
<evidence type="ECO:0000305" key="3"/>
<evidence type="ECO:0000305" key="4">
    <source>
    </source>
</evidence>
<accession>P0DQG9</accession>
<reference key="1">
    <citation type="journal article" date="2014" name="Mol. Biol. Evol.">
        <title>Clawing through evolution: toxin diversification and convergence in the ancient lineage Chilopoda (centipedes).</title>
        <authorList>
            <person name="Undheim E.A."/>
            <person name="Jones A."/>
            <person name="Clauser K.R."/>
            <person name="Holland J.W."/>
            <person name="Pineda S.S."/>
            <person name="King G.F."/>
            <person name="Fry B.G."/>
        </authorList>
    </citation>
    <scope>NUCLEOTIDE SEQUENCE [MRNA]</scope>
    <scope>NOMENCLATURE</scope>
    <source>
        <tissue>Venom gland</tissue>
    </source>
</reference>
<name>TXG2A_SCOMO</name>
<feature type="signal peptide" evidence="1">
    <location>
        <begin position="1"/>
        <end position="28"/>
    </location>
</feature>
<feature type="chain" id="PRO_0000446807" description="U-scoloptoxin(16)-Sm2a" evidence="3">
    <location>
        <begin position="29"/>
        <end position="111"/>
    </location>
</feature>
<organism>
    <name type="scientific">Scolopendra morsitans</name>
    <name type="common">Tanzanian blue ringleg centipede</name>
    <dbReference type="NCBI Taxonomy" id="943129"/>
    <lineage>
        <taxon>Eukaryota</taxon>
        <taxon>Metazoa</taxon>
        <taxon>Ecdysozoa</taxon>
        <taxon>Arthropoda</taxon>
        <taxon>Myriapoda</taxon>
        <taxon>Chilopoda</taxon>
        <taxon>Pleurostigmophora</taxon>
        <taxon>Scolopendromorpha</taxon>
        <taxon>Scolopendridae</taxon>
        <taxon>Scolopendra</taxon>
    </lineage>
</organism>
<proteinExistence type="inferred from homology"/>
<protein>
    <recommendedName>
        <fullName evidence="2">U-scoloptoxin(16)-Sm2a</fullName>
        <shortName evidence="2">U-SLPTX(16)-Sm2a</shortName>
    </recommendedName>
</protein>
<comment type="subcellular location">
    <subcellularLocation>
        <location evidence="4">Secreted</location>
    </subcellularLocation>
</comment>
<comment type="tissue specificity">
    <text evidence="4">Expressed by the venom gland.</text>
</comment>
<comment type="PTM">
    <text evidence="3">Contains 4 disulfide bonds.</text>
</comment>
<comment type="similarity">
    <text evidence="3">Belongs to the scoloptoxin-16 family.</text>
</comment>
<comment type="caution">
    <text evidence="4">All S.morsitans family members described in 'Undeheim et al., 2014' have not been imported into UniProtKB. Please, refer to this paper to access them.</text>
</comment>
<comment type="online information" name="National Center for Biotechnology Information (NCBI)">
    <link uri="https://www.ncbi.nlm.nih.gov/nuccore/GASH01000163"/>
</comment>
<keyword id="KW-1015">Disulfide bond</keyword>
<keyword id="KW-0964">Secreted</keyword>
<keyword id="KW-0732">Signal</keyword>
<keyword id="KW-0800">Toxin</keyword>